<proteinExistence type="inferred from homology"/>
<reference key="1">
    <citation type="submission" date="2006-03" db="EMBL/GenBank/DDBJ databases">
        <title>Complete sequence of chromosome of Psychrobacter cryohalolentis K5.</title>
        <authorList>
            <consortium name="US DOE Joint Genome Institute"/>
            <person name="Copeland A."/>
            <person name="Lucas S."/>
            <person name="Lapidus A."/>
            <person name="Barry K."/>
            <person name="Detter J.C."/>
            <person name="Glavina T."/>
            <person name="Hammon N."/>
            <person name="Israni S."/>
            <person name="Dalin E."/>
            <person name="Tice H."/>
            <person name="Pitluck S."/>
            <person name="Brettin T."/>
            <person name="Bruce D."/>
            <person name="Han C."/>
            <person name="Tapia R."/>
            <person name="Sims D.R."/>
            <person name="Gilna P."/>
            <person name="Schmutz J."/>
            <person name="Larimer F."/>
            <person name="Land M."/>
            <person name="Hauser L."/>
            <person name="Kyrpides N."/>
            <person name="Kim E."/>
            <person name="Richardson P."/>
        </authorList>
    </citation>
    <scope>NUCLEOTIDE SEQUENCE [LARGE SCALE GENOMIC DNA]</scope>
    <source>
        <strain>ATCC BAA-1226 / DSM 17306 / VKM B-2378 / K5</strain>
    </source>
</reference>
<name>GLND_PSYCK</name>
<keyword id="KW-0378">Hydrolase</keyword>
<keyword id="KW-0460">Magnesium</keyword>
<keyword id="KW-0511">Multifunctional enzyme</keyword>
<keyword id="KW-0548">Nucleotidyltransferase</keyword>
<keyword id="KW-0677">Repeat</keyword>
<keyword id="KW-0808">Transferase</keyword>
<accession>Q1QDM9</accession>
<evidence type="ECO:0000255" key="1">
    <source>
        <dbReference type="HAMAP-Rule" id="MF_00277"/>
    </source>
</evidence>
<evidence type="ECO:0000255" key="2">
    <source>
        <dbReference type="PROSITE-ProRule" id="PRU01175"/>
    </source>
</evidence>
<gene>
    <name evidence="1" type="primary">glnD</name>
    <name type="ordered locus">Pcryo_0441</name>
</gene>
<comment type="function">
    <text evidence="1">Modifies, by uridylylation and deuridylylation, the PII regulatory proteins (GlnB and homologs), in response to the nitrogen status of the cell that GlnD senses through the glutamine level. Under low glutamine levels, catalyzes the conversion of the PII proteins and UTP to PII-UMP and PPi, while under higher glutamine levels, GlnD hydrolyzes PII-UMP to PII and UMP (deuridylylation). Thus, controls uridylylation state and activity of the PII proteins, and plays an important role in the regulation of nitrogen assimilation and metabolism.</text>
</comment>
<comment type="catalytic activity">
    <reaction evidence="1">
        <text>[protein-PII]-L-tyrosine + UTP = [protein-PII]-uridylyl-L-tyrosine + diphosphate</text>
        <dbReference type="Rhea" id="RHEA:13673"/>
        <dbReference type="Rhea" id="RHEA-COMP:12147"/>
        <dbReference type="Rhea" id="RHEA-COMP:12148"/>
        <dbReference type="ChEBI" id="CHEBI:33019"/>
        <dbReference type="ChEBI" id="CHEBI:46398"/>
        <dbReference type="ChEBI" id="CHEBI:46858"/>
        <dbReference type="ChEBI" id="CHEBI:90602"/>
        <dbReference type="EC" id="2.7.7.59"/>
    </reaction>
</comment>
<comment type="catalytic activity">
    <reaction evidence="1">
        <text>[protein-PII]-uridylyl-L-tyrosine + H2O = [protein-PII]-L-tyrosine + UMP + H(+)</text>
        <dbReference type="Rhea" id="RHEA:48600"/>
        <dbReference type="Rhea" id="RHEA-COMP:12147"/>
        <dbReference type="Rhea" id="RHEA-COMP:12148"/>
        <dbReference type="ChEBI" id="CHEBI:15377"/>
        <dbReference type="ChEBI" id="CHEBI:15378"/>
        <dbReference type="ChEBI" id="CHEBI:46858"/>
        <dbReference type="ChEBI" id="CHEBI:57865"/>
        <dbReference type="ChEBI" id="CHEBI:90602"/>
    </reaction>
</comment>
<comment type="cofactor">
    <cofactor evidence="1">
        <name>Mg(2+)</name>
        <dbReference type="ChEBI" id="CHEBI:18420"/>
    </cofactor>
</comment>
<comment type="activity regulation">
    <text evidence="1">Uridylyltransferase (UTase) activity is inhibited by glutamine, while glutamine activates uridylyl-removing (UR) activity.</text>
</comment>
<comment type="domain">
    <text evidence="1">Has four distinct domains: an N-terminal nucleotidyltransferase (NT) domain responsible for UTase activity, a central HD domain that encodes UR activity, and two C-terminal ACT domains that seem to have a role in glutamine sensing.</text>
</comment>
<comment type="similarity">
    <text evidence="1">Belongs to the GlnD family.</text>
</comment>
<organism>
    <name type="scientific">Psychrobacter cryohalolentis (strain ATCC BAA-1226 / DSM 17306 / VKM B-2378 / K5)</name>
    <dbReference type="NCBI Taxonomy" id="335284"/>
    <lineage>
        <taxon>Bacteria</taxon>
        <taxon>Pseudomonadati</taxon>
        <taxon>Pseudomonadota</taxon>
        <taxon>Gammaproteobacteria</taxon>
        <taxon>Moraxellales</taxon>
        <taxon>Moraxellaceae</taxon>
        <taxon>Psychrobacter</taxon>
    </lineage>
</organism>
<protein>
    <recommendedName>
        <fullName evidence="1">Bifunctional uridylyltransferase/uridylyl-removing enzyme</fullName>
        <shortName evidence="1">UTase/UR</shortName>
    </recommendedName>
    <alternativeName>
        <fullName evidence="1">Bifunctional [protein-PII] modification enzyme</fullName>
    </alternativeName>
    <alternativeName>
        <fullName evidence="1">Bifunctional nitrogen sensor protein</fullName>
    </alternativeName>
    <domain>
        <recommendedName>
            <fullName evidence="1">[Protein-PII] uridylyltransferase</fullName>
            <shortName evidence="1">PII uridylyltransferase</shortName>
            <shortName evidence="1">UTase</shortName>
            <ecNumber evidence="1">2.7.7.59</ecNumber>
        </recommendedName>
    </domain>
    <domain>
        <recommendedName>
            <fullName evidence="1">[Protein-PII]-UMP uridylyl-removing enzyme</fullName>
            <shortName evidence="1">UR</shortName>
            <ecNumber evidence="1">3.1.4.-</ecNumber>
        </recommendedName>
    </domain>
</protein>
<feature type="chain" id="PRO_1000022352" description="Bifunctional uridylyltransferase/uridylyl-removing enzyme">
    <location>
        <begin position="1"/>
        <end position="913"/>
    </location>
</feature>
<feature type="domain" description="HD" evidence="2">
    <location>
        <begin position="476"/>
        <end position="592"/>
    </location>
</feature>
<feature type="domain" description="ACT 1" evidence="1">
    <location>
        <begin position="730"/>
        <end position="815"/>
    </location>
</feature>
<feature type="domain" description="ACT 2" evidence="1">
    <location>
        <begin position="838"/>
        <end position="913"/>
    </location>
</feature>
<feature type="region of interest" description="Uridylyltransferase">
    <location>
        <begin position="1"/>
        <end position="358"/>
    </location>
</feature>
<feature type="region of interest" description="Uridylyl-removing">
    <location>
        <begin position="359"/>
        <end position="729"/>
    </location>
</feature>
<sequence>MFNCDVTAIDLTPMPLFSADNMTTAFLSTDTSVVEKSLFGIPEWLLQINDDISRALERGVNIRQLVSARACVIDDLLIELFKCFGLDKTDLALFATGGYGRGELSLHSDIDILLLMPHDINADTSSKIDNLVALLWDIGLEPALSVRSVSDCLEAALDHTIASALLEARLLIGNDALQNVPHQIVNNQWSPRSFYDVKIDEAKARYLQHNATEYNLEPNIKTAPGGLRDIHIIGWVTKRYFRVSKLYDLVQQNFLTEKEFDELSFSENYLWQIRHYLHELTGRNENKLLFDYQREIAQLMGYDTQTDDQPNAAVERFMRDYYRCAMQISTLSEMLTNHYYETIIEAQLPDEERPKKQPINARFNQVGDQIAMAHHRVFAQHPESILEMFLLMGQYGIKNVRTHTLRALKIAARGIDQAYRDNPTHQTLFLANLKEQNYLFHRLRTMNRYGVLGNYIPAFAQVTGLMQYDLFHRYTVDAHTLFLIRILHRFTDPHFYEDFPLVSSIFQRIERKEILVLAAMFHDIAKGRGGNHSQLGEIESIEFCLAHGMSTADANLVGWLTRYHLLMSMTAQKKDISDPEVVTLFADLVGNVTHLNHLYVLTVADMNATNPQLWNSWRATLMKQLYSQTRRILRADIDAPTNRQDMISATRKQALVMLDNVDNQHMNRDEVLRLWDDLGDEYFLREIAEDILWHTEAILNHPPIGRASNADSPPLVVLREHRELALDAVQVFVYTQDQVNLFAVTMAVFDQMNLDVLDARIITATRDFALDSYVLLDRSGTLLVDSDSQQELKQRLIDAFKNPTAPKLTHKRIPRQLKHFDVATTINFDFNDASNQHIMSLETLDQPGLLARVGQVFLQQQIEVHAARITTLGERAEDMFYISDQNDQALSADKLKTLKTALIDSLSVRNDRV</sequence>
<dbReference type="EC" id="2.7.7.59" evidence="1"/>
<dbReference type="EC" id="3.1.4.-" evidence="1"/>
<dbReference type="EMBL" id="CP000323">
    <property type="protein sequence ID" value="ABE74224.1"/>
    <property type="molecule type" value="Genomic_DNA"/>
</dbReference>
<dbReference type="RefSeq" id="WP_011512809.1">
    <property type="nucleotide sequence ID" value="NC_007969.1"/>
</dbReference>
<dbReference type="SMR" id="Q1QDM9"/>
<dbReference type="STRING" id="335284.Pcryo_0441"/>
<dbReference type="KEGG" id="pcr:Pcryo_0441"/>
<dbReference type="eggNOG" id="COG2844">
    <property type="taxonomic scope" value="Bacteria"/>
</dbReference>
<dbReference type="HOGENOM" id="CLU_012833_0_0_6"/>
<dbReference type="Proteomes" id="UP000002425">
    <property type="component" value="Chromosome"/>
</dbReference>
<dbReference type="GO" id="GO:0008773">
    <property type="term" value="F:[protein-PII] uridylyltransferase activity"/>
    <property type="evidence" value="ECO:0007669"/>
    <property type="project" value="UniProtKB-UniRule"/>
</dbReference>
<dbReference type="GO" id="GO:0008081">
    <property type="term" value="F:phosphoric diester hydrolase activity"/>
    <property type="evidence" value="ECO:0007669"/>
    <property type="project" value="UniProtKB-UniRule"/>
</dbReference>
<dbReference type="GO" id="GO:0006808">
    <property type="term" value="P:regulation of nitrogen utilization"/>
    <property type="evidence" value="ECO:0007669"/>
    <property type="project" value="UniProtKB-UniRule"/>
</dbReference>
<dbReference type="CDD" id="cd04899">
    <property type="entry name" value="ACT_ACR-UUR-like_2"/>
    <property type="match status" value="1"/>
</dbReference>
<dbReference type="CDD" id="cd04900">
    <property type="entry name" value="ACT_UUR-like_1"/>
    <property type="match status" value="1"/>
</dbReference>
<dbReference type="CDD" id="cd05401">
    <property type="entry name" value="NT_GlnE_GlnD_like"/>
    <property type="match status" value="1"/>
</dbReference>
<dbReference type="HAMAP" id="MF_00277">
    <property type="entry name" value="PII_uridylyl_transf"/>
    <property type="match status" value="1"/>
</dbReference>
<dbReference type="InterPro" id="IPR045865">
    <property type="entry name" value="ACT-like_dom_sf"/>
</dbReference>
<dbReference type="InterPro" id="IPR002912">
    <property type="entry name" value="ACT_dom"/>
</dbReference>
<dbReference type="InterPro" id="IPR003607">
    <property type="entry name" value="HD/PDEase_dom"/>
</dbReference>
<dbReference type="InterPro" id="IPR006674">
    <property type="entry name" value="HD_domain"/>
</dbReference>
<dbReference type="InterPro" id="IPR043519">
    <property type="entry name" value="NT_sf"/>
</dbReference>
<dbReference type="InterPro" id="IPR013546">
    <property type="entry name" value="PII_UdlTrfase/GS_AdlTrfase"/>
</dbReference>
<dbReference type="InterPro" id="IPR010043">
    <property type="entry name" value="UTase/UR"/>
</dbReference>
<dbReference type="NCBIfam" id="TIGR01693">
    <property type="entry name" value="UTase_glnD"/>
    <property type="match status" value="1"/>
</dbReference>
<dbReference type="PANTHER" id="PTHR47320">
    <property type="entry name" value="BIFUNCTIONAL URIDYLYLTRANSFERASE/URIDYLYL-REMOVING ENZYME"/>
    <property type="match status" value="1"/>
</dbReference>
<dbReference type="PANTHER" id="PTHR47320:SF1">
    <property type="entry name" value="BIFUNCTIONAL URIDYLYLTRANSFERASE_URIDYLYL-REMOVING ENZYME"/>
    <property type="match status" value="1"/>
</dbReference>
<dbReference type="Pfam" id="PF08335">
    <property type="entry name" value="GlnD_UR_UTase"/>
    <property type="match status" value="1"/>
</dbReference>
<dbReference type="PIRSF" id="PIRSF006288">
    <property type="entry name" value="PII_uridyltransf"/>
    <property type="match status" value="1"/>
</dbReference>
<dbReference type="SMART" id="SM00471">
    <property type="entry name" value="HDc"/>
    <property type="match status" value="1"/>
</dbReference>
<dbReference type="SUPFAM" id="SSF55021">
    <property type="entry name" value="ACT-like"/>
    <property type="match status" value="1"/>
</dbReference>
<dbReference type="SUPFAM" id="SSF109604">
    <property type="entry name" value="HD-domain/PDEase-like"/>
    <property type="match status" value="1"/>
</dbReference>
<dbReference type="SUPFAM" id="SSF81301">
    <property type="entry name" value="Nucleotidyltransferase"/>
    <property type="match status" value="1"/>
</dbReference>
<dbReference type="SUPFAM" id="SSF81593">
    <property type="entry name" value="Nucleotidyltransferase substrate binding subunit/domain"/>
    <property type="match status" value="1"/>
</dbReference>
<dbReference type="PROSITE" id="PS51671">
    <property type="entry name" value="ACT"/>
    <property type="match status" value="2"/>
</dbReference>
<dbReference type="PROSITE" id="PS51831">
    <property type="entry name" value="HD"/>
    <property type="match status" value="1"/>
</dbReference>